<gene>
    <name type="primary">HXK1</name>
</gene>
<organism>
    <name type="scientific">Spinacia oleracea</name>
    <name type="common">Spinach</name>
    <dbReference type="NCBI Taxonomy" id="3562"/>
    <lineage>
        <taxon>Eukaryota</taxon>
        <taxon>Viridiplantae</taxon>
        <taxon>Streptophyta</taxon>
        <taxon>Embryophyta</taxon>
        <taxon>Tracheophyta</taxon>
        <taxon>Spermatophyta</taxon>
        <taxon>Magnoliopsida</taxon>
        <taxon>eudicotyledons</taxon>
        <taxon>Gunneridae</taxon>
        <taxon>Pentapetalae</taxon>
        <taxon>Caryophyllales</taxon>
        <taxon>Chenopodiaceae</taxon>
        <taxon>Chenopodioideae</taxon>
        <taxon>Anserineae</taxon>
        <taxon>Spinacia</taxon>
    </lineage>
</organism>
<name>HXK1_SPIOL</name>
<reference key="1">
    <citation type="journal article" date="1999" name="FEBS Lett.">
        <title>Spinach hexokinase I is located in the outer envelope membrane of plastids.</title>
        <authorList>
            <person name="Wiese A."/>
            <person name="Groener F."/>
            <person name="Sonnewald U."/>
            <person name="Deppner H."/>
            <person name="Lerchl J."/>
            <person name="Fluegge U.I."/>
            <person name="Weber A."/>
        </authorList>
    </citation>
    <scope>NUCLEOTIDE SEQUENCE [MRNA]</scope>
    <scope>SUBCELLULAR LOCATION</scope>
</reference>
<keyword id="KW-0067">ATP-binding</keyword>
<keyword id="KW-0150">Chloroplast</keyword>
<keyword id="KW-0324">Glycolysis</keyword>
<keyword id="KW-0418">Kinase</keyword>
<keyword id="KW-0472">Membrane</keyword>
<keyword id="KW-0547">Nucleotide-binding</keyword>
<keyword id="KW-0934">Plastid</keyword>
<keyword id="KW-1002">Plastid outer membrane</keyword>
<keyword id="KW-1185">Reference proteome</keyword>
<keyword id="KW-0808">Transferase</keyword>
<keyword id="KW-0812">Transmembrane</keyword>
<keyword id="KW-1133">Transmembrane helix</keyword>
<protein>
    <recommendedName>
        <fullName>Hexokinase-1</fullName>
        <ecNumber evidence="1">2.7.1.1</ecNumber>
    </recommendedName>
    <alternativeName>
        <fullName>SoHxK1</fullName>
    </alternativeName>
</protein>
<sequence length="498" mass="54135">MRKAAVGAAVVCTAAVCAAAAVLVRQRMKSSSKWGRVMAILKELDDNCGTPLGKLRQVADAMTVEMHAGLASEGASKLKMLISYVDNLPTGDEHGLFYALDLGGTNFRVLRVKLGGKEKRVVEQEFDEVSIPPELMVGTSEQLFDYIAEALAKFVATESEGLHPEPNKQRELGFTFSFPVKQTSIASGTLIRWTKGFNIEDTVGEDVVAELTKAMLRKGVDMRVTALVNDTVGTLAGGRYYKEDVIAAVILGTGTNAAYVERASAIHKWHGPLPKSGEMVINMEWGNFRSSYLPLTEYDIALDEESLNPGEQIFEKMISGMYLGEIVRRVLYRMADEASLFGDTVPSKLKTPFILRTPDMSAMHHDTSPDLKVVASKLKDVLGIPNSSLKVRKIIVDVCDVIASRGACISAAGILGIIKKLGRDTLKQGENQKSVIALDGGLFEHYAKFRECMEDSLKELLGDEVAETIVIEHSNDGSGIGAALLAASHSQYLEEDES</sequence>
<proteinExistence type="evidence at transcript level"/>
<accession>Q9SEK3</accession>
<comment type="function">
    <text evidence="1">Fructose and glucose phosphorylating enzyme.</text>
</comment>
<comment type="catalytic activity">
    <reaction evidence="1">
        <text>a D-hexose + ATP = a D-hexose 6-phosphate + ADP + H(+)</text>
        <dbReference type="Rhea" id="RHEA:22740"/>
        <dbReference type="ChEBI" id="CHEBI:4194"/>
        <dbReference type="ChEBI" id="CHEBI:15378"/>
        <dbReference type="ChEBI" id="CHEBI:30616"/>
        <dbReference type="ChEBI" id="CHEBI:229467"/>
        <dbReference type="ChEBI" id="CHEBI:456216"/>
        <dbReference type="EC" id="2.7.1.1"/>
    </reaction>
    <physiologicalReaction direction="left-to-right" evidence="1">
        <dbReference type="Rhea" id="RHEA:22741"/>
    </physiologicalReaction>
</comment>
<comment type="catalytic activity">
    <reaction evidence="1">
        <text>D-fructose + ATP = D-fructose 6-phosphate + ADP + H(+)</text>
        <dbReference type="Rhea" id="RHEA:16125"/>
        <dbReference type="ChEBI" id="CHEBI:15378"/>
        <dbReference type="ChEBI" id="CHEBI:30616"/>
        <dbReference type="ChEBI" id="CHEBI:37721"/>
        <dbReference type="ChEBI" id="CHEBI:61527"/>
        <dbReference type="ChEBI" id="CHEBI:456216"/>
        <dbReference type="EC" id="2.7.1.1"/>
    </reaction>
    <physiologicalReaction direction="left-to-right" evidence="1">
        <dbReference type="Rhea" id="RHEA:16126"/>
    </physiologicalReaction>
</comment>
<comment type="catalytic activity">
    <reaction evidence="1">
        <text>D-glucose + ATP = D-glucose 6-phosphate + ADP + H(+)</text>
        <dbReference type="Rhea" id="RHEA:17825"/>
        <dbReference type="ChEBI" id="CHEBI:4167"/>
        <dbReference type="ChEBI" id="CHEBI:15378"/>
        <dbReference type="ChEBI" id="CHEBI:30616"/>
        <dbReference type="ChEBI" id="CHEBI:61548"/>
        <dbReference type="ChEBI" id="CHEBI:456216"/>
        <dbReference type="EC" id="2.7.1.1"/>
    </reaction>
    <physiologicalReaction direction="left-to-right" evidence="1">
        <dbReference type="Rhea" id="RHEA:17826"/>
    </physiologicalReaction>
</comment>
<comment type="pathway">
    <text evidence="1">Carbohydrate metabolism; hexose metabolism.</text>
</comment>
<comment type="pathway">
    <text evidence="1">Carbohydrate degradation; glycolysis; D-glyceraldehyde 3-phosphate and glycerone phosphate from D-glucose: step 1/4.</text>
</comment>
<comment type="subcellular location">
    <subcellularLocation>
        <location evidence="5">Plastid</location>
        <location evidence="5">Chloroplast outer membrane</location>
        <topology evidence="5">Single-pass membrane protein</topology>
    </subcellularLocation>
</comment>
<comment type="similarity">
    <text evidence="4 6">Belongs to the hexokinase family.</text>
</comment>
<dbReference type="EC" id="2.7.1.1" evidence="1"/>
<dbReference type="EMBL" id="AF118132">
    <property type="protein sequence ID" value="AAF18584.1"/>
    <property type="molecule type" value="mRNA"/>
</dbReference>
<dbReference type="SMR" id="Q9SEK3"/>
<dbReference type="OrthoDB" id="419537at2759"/>
<dbReference type="BRENDA" id="2.7.1.1">
    <property type="organism ID" value="5812"/>
</dbReference>
<dbReference type="UniPathway" id="UPA00109">
    <property type="reaction ID" value="UER00180"/>
</dbReference>
<dbReference type="UniPathway" id="UPA00242"/>
<dbReference type="Proteomes" id="UP001155700">
    <property type="component" value="Unplaced"/>
</dbReference>
<dbReference type="GO" id="GO:0009707">
    <property type="term" value="C:chloroplast outer membrane"/>
    <property type="evidence" value="ECO:0007669"/>
    <property type="project" value="UniProtKB-SubCell"/>
</dbReference>
<dbReference type="GO" id="GO:0005829">
    <property type="term" value="C:cytosol"/>
    <property type="evidence" value="ECO:0000318"/>
    <property type="project" value="GO_Central"/>
</dbReference>
<dbReference type="GO" id="GO:0005739">
    <property type="term" value="C:mitochondrion"/>
    <property type="evidence" value="ECO:0000318"/>
    <property type="project" value="GO_Central"/>
</dbReference>
<dbReference type="GO" id="GO:0005524">
    <property type="term" value="F:ATP binding"/>
    <property type="evidence" value="ECO:0007669"/>
    <property type="project" value="UniProtKB-KW"/>
</dbReference>
<dbReference type="GO" id="GO:0005536">
    <property type="term" value="F:D-glucose binding"/>
    <property type="evidence" value="ECO:0007669"/>
    <property type="project" value="InterPro"/>
</dbReference>
<dbReference type="GO" id="GO:0008865">
    <property type="term" value="F:fructokinase activity"/>
    <property type="evidence" value="ECO:0000318"/>
    <property type="project" value="GO_Central"/>
</dbReference>
<dbReference type="GO" id="GO:0004340">
    <property type="term" value="F:glucokinase activity"/>
    <property type="evidence" value="ECO:0000318"/>
    <property type="project" value="GO_Central"/>
</dbReference>
<dbReference type="GO" id="GO:0051156">
    <property type="term" value="P:glucose 6-phosphate metabolic process"/>
    <property type="evidence" value="ECO:0000318"/>
    <property type="project" value="GO_Central"/>
</dbReference>
<dbReference type="GO" id="GO:0006006">
    <property type="term" value="P:glucose metabolic process"/>
    <property type="evidence" value="ECO:0000318"/>
    <property type="project" value="GO_Central"/>
</dbReference>
<dbReference type="GO" id="GO:0006096">
    <property type="term" value="P:glycolytic process"/>
    <property type="evidence" value="ECO:0000318"/>
    <property type="project" value="GO_Central"/>
</dbReference>
<dbReference type="GO" id="GO:0001678">
    <property type="term" value="P:intracellular glucose homeostasis"/>
    <property type="evidence" value="ECO:0000318"/>
    <property type="project" value="GO_Central"/>
</dbReference>
<dbReference type="CDD" id="cd24020">
    <property type="entry name" value="ASKHA_NBD_HK_plant"/>
    <property type="match status" value="1"/>
</dbReference>
<dbReference type="FunFam" id="3.30.420.40:FF:000034">
    <property type="entry name" value="Phosphotransferase"/>
    <property type="match status" value="1"/>
</dbReference>
<dbReference type="FunFam" id="3.40.367.20:FF:000003">
    <property type="entry name" value="Phosphotransferase"/>
    <property type="match status" value="1"/>
</dbReference>
<dbReference type="Gene3D" id="3.30.420.40">
    <property type="match status" value="1"/>
</dbReference>
<dbReference type="Gene3D" id="3.40.367.20">
    <property type="match status" value="1"/>
</dbReference>
<dbReference type="InterPro" id="IPR043129">
    <property type="entry name" value="ATPase_NBD"/>
</dbReference>
<dbReference type="InterPro" id="IPR001312">
    <property type="entry name" value="Hexokinase"/>
</dbReference>
<dbReference type="InterPro" id="IPR022673">
    <property type="entry name" value="Hexokinase_C"/>
</dbReference>
<dbReference type="InterPro" id="IPR022672">
    <property type="entry name" value="Hexokinase_N"/>
</dbReference>
<dbReference type="PANTHER" id="PTHR19443">
    <property type="entry name" value="HEXOKINASE"/>
    <property type="match status" value="1"/>
</dbReference>
<dbReference type="PANTHER" id="PTHR19443:SF16">
    <property type="entry name" value="HEXOKINASE TYPE 1-RELATED"/>
    <property type="match status" value="1"/>
</dbReference>
<dbReference type="Pfam" id="PF00349">
    <property type="entry name" value="Hexokinase_1"/>
    <property type="match status" value="1"/>
</dbReference>
<dbReference type="Pfam" id="PF03727">
    <property type="entry name" value="Hexokinase_2"/>
    <property type="match status" value="1"/>
</dbReference>
<dbReference type="PRINTS" id="PR00475">
    <property type="entry name" value="HEXOKINASE"/>
</dbReference>
<dbReference type="SUPFAM" id="SSF53067">
    <property type="entry name" value="Actin-like ATPase domain"/>
    <property type="match status" value="2"/>
</dbReference>
<dbReference type="PROSITE" id="PS51748">
    <property type="entry name" value="HEXOKINASE_2"/>
    <property type="match status" value="1"/>
</dbReference>
<evidence type="ECO:0000250" key="1">
    <source>
        <dbReference type="UniProtKB" id="Q6Q8A5"/>
    </source>
</evidence>
<evidence type="ECO:0000250" key="2">
    <source>
        <dbReference type="UniProtKB" id="Q8LQ68"/>
    </source>
</evidence>
<evidence type="ECO:0000255" key="3"/>
<evidence type="ECO:0000255" key="4">
    <source>
        <dbReference type="PROSITE-ProRule" id="PRU01084"/>
    </source>
</evidence>
<evidence type="ECO:0000269" key="5">
    <source>
    </source>
</evidence>
<evidence type="ECO:0000305" key="6"/>
<feature type="chain" id="PRO_0000197617" description="Hexokinase-1">
    <location>
        <begin position="1"/>
        <end position="498"/>
    </location>
</feature>
<feature type="transmembrane region" description="Helical" evidence="3">
    <location>
        <begin position="4"/>
        <end position="24"/>
    </location>
</feature>
<feature type="domain" description="Hexokinase" evidence="4">
    <location>
        <begin position="35"/>
        <end position="487"/>
    </location>
</feature>
<feature type="region of interest" description="Hexokinase small subdomain" evidence="4">
    <location>
        <begin position="90"/>
        <end position="228"/>
    </location>
</feature>
<feature type="region of interest" description="Hexokinase large subdomain" evidence="4">
    <location>
        <begin position="229"/>
        <end position="476"/>
    </location>
</feature>
<feature type="binding site" evidence="2">
    <location>
        <position position="104"/>
    </location>
    <ligand>
        <name>ADP</name>
        <dbReference type="ChEBI" id="CHEBI:456216"/>
    </ligand>
</feature>
<feature type="binding site" evidence="2">
    <location>
        <position position="105"/>
    </location>
    <ligand>
        <name>ADP</name>
        <dbReference type="ChEBI" id="CHEBI:456216"/>
    </ligand>
</feature>
<feature type="binding site" evidence="2">
    <location>
        <position position="106"/>
    </location>
    <ligand>
        <name>ADP</name>
        <dbReference type="ChEBI" id="CHEBI:456216"/>
    </ligand>
</feature>
<feature type="binding site" evidence="2">
    <location>
        <position position="194"/>
    </location>
    <ligand>
        <name>D-glucose</name>
        <dbReference type="ChEBI" id="CHEBI:4167"/>
    </ligand>
</feature>
<feature type="binding site" evidence="2">
    <location>
        <position position="195"/>
    </location>
    <ligand>
        <name>D-glucose</name>
        <dbReference type="ChEBI" id="CHEBI:4167"/>
    </ligand>
</feature>
<feature type="binding site" evidence="2">
    <location>
        <position position="229"/>
    </location>
    <ligand>
        <name>D-glucose</name>
        <dbReference type="ChEBI" id="CHEBI:4167"/>
    </ligand>
</feature>
<feature type="binding site" evidence="2">
    <location>
        <position position="230"/>
    </location>
    <ligand>
        <name>D-glucose</name>
        <dbReference type="ChEBI" id="CHEBI:4167"/>
    </ligand>
</feature>
<feature type="binding site" evidence="2">
    <location>
        <position position="253"/>
    </location>
    <ligand>
        <name>ADP</name>
        <dbReference type="ChEBI" id="CHEBI:456216"/>
    </ligand>
</feature>
<feature type="binding site" evidence="2">
    <location>
        <position position="256"/>
    </location>
    <ligand>
        <name>D-glucose</name>
        <dbReference type="ChEBI" id="CHEBI:4167"/>
    </ligand>
</feature>
<feature type="binding site" evidence="2">
    <location>
        <position position="284"/>
    </location>
    <ligand>
        <name>D-glucose</name>
        <dbReference type="ChEBI" id="CHEBI:4167"/>
    </ligand>
</feature>
<feature type="binding site" evidence="2">
    <location>
        <position position="315"/>
    </location>
    <ligand>
        <name>D-glucose</name>
        <dbReference type="ChEBI" id="CHEBI:4167"/>
    </ligand>
</feature>
<feature type="binding site" evidence="2">
    <location>
        <position position="441"/>
    </location>
    <ligand>
        <name>ADP</name>
        <dbReference type="ChEBI" id="CHEBI:456216"/>
    </ligand>
</feature>